<organism>
    <name type="scientific">Geobacter sulfurreducens (strain ATCC 51573 / DSM 12127 / PCA)</name>
    <dbReference type="NCBI Taxonomy" id="243231"/>
    <lineage>
        <taxon>Bacteria</taxon>
        <taxon>Pseudomonadati</taxon>
        <taxon>Thermodesulfobacteriota</taxon>
        <taxon>Desulfuromonadia</taxon>
        <taxon>Geobacterales</taxon>
        <taxon>Geobacteraceae</taxon>
        <taxon>Geobacter</taxon>
    </lineage>
</organism>
<accession>Q74A86</accession>
<sequence>MKKGMKVSLSVAAAALLMSAPAAFAFHSGGVAECEGCHTMHNSLGGAVMNSATAQFTTGPMLLQGATQSSSCLNCHQHAGDTGPSSYHISTAEADMPAGTAPLQMTPGGDFGWVKKTYTWNVRGLNTSEGERKGHNIVAGDYNYVADTTLTTAPGGTYPANQLHCSSCHDPHGKYRRFVDGSIATTGLPIKNSGSYQNSNDPTAWGAVGAYRILGGTGYQPKSLSGSYAFANQVPAAVAPSTYNRTEATTQTRVAYGQGMSEWCANCHTDIHNSAYPTNLRHPAGNGAKFGATIAGLYNSYKKSGDLTGTQASAYLSLAPFEEGTADYTVLKGHAKIDDTALTGADATSNVNCLSCHRAHASGFDSMTRFNLAYEFTTIADASGNSIYGTDPNTSSLQGRSVNEMTAAYYGRTADKFAPYQRALCNKCHAKD</sequence>
<name>OMCS_GEOSL</name>
<gene>
    <name evidence="6" type="primary">omcS</name>
    <name evidence="8" type="ordered locus">GSU2504</name>
</gene>
<reference key="1">
    <citation type="journal article" date="2003" name="Science">
        <title>Genome of Geobacter sulfurreducens: metal reduction in subsurface environments.</title>
        <authorList>
            <person name="Methe B.A."/>
            <person name="Nelson K.E."/>
            <person name="Eisen J.A."/>
            <person name="Paulsen I.T."/>
            <person name="Nelson W.C."/>
            <person name="Heidelberg J.F."/>
            <person name="Wu D."/>
            <person name="Wu M."/>
            <person name="Ward N.L."/>
            <person name="Beanan M.J."/>
            <person name="Dodson R.J."/>
            <person name="Madupu R."/>
            <person name="Brinkac L.M."/>
            <person name="Daugherty S.C."/>
            <person name="DeBoy R.T."/>
            <person name="Durkin A.S."/>
            <person name="Gwinn M.L."/>
            <person name="Kolonay J.F."/>
            <person name="Sullivan S.A."/>
            <person name="Haft D.H."/>
            <person name="Selengut J."/>
            <person name="Davidsen T.M."/>
            <person name="Zafar N."/>
            <person name="White O."/>
            <person name="Tran B."/>
            <person name="Romero C."/>
            <person name="Forberger H.A."/>
            <person name="Weidman J.F."/>
            <person name="Khouri H.M."/>
            <person name="Feldblyum T.V."/>
            <person name="Utterback T.R."/>
            <person name="Van Aken S.E."/>
            <person name="Lovley D.R."/>
            <person name="Fraser C.M."/>
        </authorList>
    </citation>
    <scope>NUCLEOTIDE SEQUENCE [LARGE SCALE GENOMIC DNA]</scope>
    <source>
        <strain>ATCC 51573 / DSM 12127 / PCA</strain>
    </source>
</reference>
<reference key="2">
    <citation type="journal article" date="2005" name="Appl. Environ. Microbiol.">
        <title>Outer membrane c-type cytochromes required for Fe(III) and Mn(IV) oxide reduction in Geobacter sulfurreducens.</title>
        <authorList>
            <person name="Mehta T."/>
            <person name="Coppi M.V."/>
            <person name="Childers S.E."/>
            <person name="Lovley D.R."/>
        </authorList>
    </citation>
    <scope>FUNCTION</scope>
    <scope>SUBCELLULAR LOCATION</scope>
    <scope>INDUCTION</scope>
    <scope>DISRUPTION PHENOTYPE</scope>
    <source>
        <strain>DL1</strain>
    </source>
</reference>
<reference key="3">
    <citation type="journal article" date="2010" name="Appl. Environ. Microbiol.">
        <title>Alignment of the c-type cytochrome OmcS along pili of Geobacter sulfurreducens.</title>
        <authorList>
            <person name="Leang C."/>
            <person name="Qian X."/>
            <person name="Mester T."/>
            <person name="Lovley D.R."/>
        </authorList>
    </citation>
    <scope>FUNCTION</scope>
    <scope>SUBCELLULAR LOCATION</scope>
</reference>
<reference key="4">
    <citation type="journal article" date="2011" name="Biochim. Biophys. Acta">
        <title>Biochemical characterization of purified OmcS, a c-type cytochrome required for insoluble Fe(III) reduction in Geobacter sulfurreducens.</title>
        <authorList>
            <person name="Qian X."/>
            <person name="Mester T."/>
            <person name="Morgado L."/>
            <person name="Arakawa T."/>
            <person name="Sharma M.L."/>
            <person name="Inoue K."/>
            <person name="Joseph C."/>
            <person name="Salgueiro C.A."/>
            <person name="Maroney M.J."/>
            <person name="Lovley D.R."/>
        </authorList>
    </citation>
    <scope>FUNCTION</scope>
    <scope>COFACTOR</scope>
    <scope>SUBCELLULAR LOCATION</scope>
    <scope>MASS SPECTROMETRY</scope>
    <source>
        <strain>GSU2215</strain>
    </source>
</reference>
<reference key="5">
    <citation type="journal article" date="2013" name="Appl. Environ. Microbiol.">
        <title>Transcriptomic and genetic analysis of direct interspecies electron transfer.</title>
        <authorList>
            <person name="Shrestha P.M."/>
            <person name="Rotaru A.E."/>
            <person name="Summers Z.M."/>
            <person name="Shrestha M."/>
            <person name="Liu F."/>
            <person name="Lovley D.R."/>
        </authorList>
    </citation>
    <scope>FUNCTION IN DIET</scope>
    <scope>INDUCTION</scope>
</reference>
<proteinExistence type="evidence at protein level"/>
<evidence type="ECO:0000255" key="1"/>
<evidence type="ECO:0000269" key="2">
    <source>
    </source>
</evidence>
<evidence type="ECO:0000269" key="3">
    <source>
    </source>
</evidence>
<evidence type="ECO:0000269" key="4">
    <source>
    </source>
</evidence>
<evidence type="ECO:0000269" key="5">
    <source>
    </source>
</evidence>
<evidence type="ECO:0000303" key="6">
    <source>
    </source>
</evidence>
<evidence type="ECO:0000303" key="7">
    <source>
    </source>
</evidence>
<evidence type="ECO:0000312" key="8">
    <source>
        <dbReference type="EMBL" id="AAR35877.1"/>
    </source>
</evidence>
<evidence type="ECO:0007829" key="9">
    <source>
        <dbReference type="PDB" id="6NEF"/>
    </source>
</evidence>
<keyword id="KW-0002">3D-structure</keyword>
<keyword id="KW-0998">Cell outer membrane</keyword>
<keyword id="KW-0249">Electron transport</keyword>
<keyword id="KW-0349">Heme</keyword>
<keyword id="KW-0408">Iron</keyword>
<keyword id="KW-0472">Membrane</keyword>
<keyword id="KW-0479">Metal-binding</keyword>
<keyword id="KW-1185">Reference proteome</keyword>
<keyword id="KW-0732">Signal</keyword>
<keyword id="KW-0813">Transport</keyword>
<comment type="function">
    <text evidence="2 3 4 5">Plays an important role in extracellular electron transfer. Can transfer electrons to insoluble Fe(3+) oxides as well as other extracellular electron acceptors, including Mn(4+) oxide and humic substances (PubMed:16332857, PubMed:20400557, PubMed:21236241). Essential for direct interspecies electron transfer (DIET) in cocultures with G.metallireducens (PubMed:23377933).</text>
</comment>
<comment type="cofactor">
    <cofactor evidence="4">
        <name>heme</name>
        <dbReference type="ChEBI" id="CHEBI:30413"/>
    </cofactor>
    <text evidence="4">Binds 6 low-spin heme groups per subunit.</text>
</comment>
<comment type="subcellular location">
    <subcellularLocation>
        <location evidence="2 3 4">Cell outer membrane</location>
    </subcellularLocation>
    <subcellularLocation>
        <location evidence="2 3 4">Cell surface</location>
    </subcellularLocation>
    <text evidence="2 3 4">Loosely associated with the cell surface (PubMed:16332857, PubMed:21236241). Localizes along the pili (PubMed:20400557).</text>
</comment>
<comment type="induction">
    <text evidence="2 5">Expressed in the presence of insoluble Fe(3+) oxide and during growth with fumarate as the sole electron acceptor, but not during growth on soluble Fe(3+) citrate (PubMed:16332857). Induced in the cocultures with G.metallireducens (PubMed:23377933).</text>
</comment>
<comment type="mass spectrometry">
    <text>With six heme groups.</text>
</comment>
<comment type="disruption phenotype">
    <text evidence="2">Deletion of the gene inhibits Fe(3+) oxide reduction, but does not impact reduction of fumarate or Fe(3+) citrate. Deletion negatively impacts the expression of omcT.</text>
</comment>
<dbReference type="EMBL" id="AE017180">
    <property type="protein sequence ID" value="AAR35877.1"/>
    <property type="molecule type" value="Genomic_DNA"/>
</dbReference>
<dbReference type="RefSeq" id="NP_953550.1">
    <property type="nucleotide sequence ID" value="NC_002939.5"/>
</dbReference>
<dbReference type="RefSeq" id="WP_010943141.1">
    <property type="nucleotide sequence ID" value="NC_002939.5"/>
</dbReference>
<dbReference type="PDB" id="6EF8">
    <property type="method" value="EM"/>
    <property type="resolution" value="3.70 A"/>
    <property type="chains" value="A/B/C/D/E/F/G=26-432"/>
</dbReference>
<dbReference type="PDB" id="6NEF">
    <property type="method" value="EM"/>
    <property type="resolution" value="3.42 A"/>
    <property type="chains" value="A=26-432"/>
</dbReference>
<dbReference type="PDBsum" id="6EF8"/>
<dbReference type="PDBsum" id="6NEF"/>
<dbReference type="EMDB" id="EMD-9046"/>
<dbReference type="EMDB" id="EMD-9357"/>
<dbReference type="SMR" id="Q74A86"/>
<dbReference type="STRING" id="243231.GSU2504"/>
<dbReference type="TCDB" id="5.B.3.1.1">
    <property type="family name" value="the geobacter nanowire electron transfer (g-net) family"/>
</dbReference>
<dbReference type="EnsemblBacteria" id="AAR35877">
    <property type="protein sequence ID" value="AAR35877"/>
    <property type="gene ID" value="GSU2504"/>
</dbReference>
<dbReference type="KEGG" id="gsu:GSU2504"/>
<dbReference type="PATRIC" id="fig|243231.5.peg.2531"/>
<dbReference type="eggNOG" id="ENOG5033TG0">
    <property type="taxonomic scope" value="Bacteria"/>
</dbReference>
<dbReference type="HOGENOM" id="CLU_627971_0_0_7"/>
<dbReference type="InParanoid" id="Q74A86"/>
<dbReference type="OrthoDB" id="9771829at2"/>
<dbReference type="Proteomes" id="UP000000577">
    <property type="component" value="Chromosome"/>
</dbReference>
<dbReference type="GO" id="GO:0009279">
    <property type="term" value="C:cell outer membrane"/>
    <property type="evidence" value="ECO:0007669"/>
    <property type="project" value="UniProtKB-SubCell"/>
</dbReference>
<dbReference type="GO" id="GO:0009986">
    <property type="term" value="C:cell surface"/>
    <property type="evidence" value="ECO:0007669"/>
    <property type="project" value="UniProtKB-SubCell"/>
</dbReference>
<dbReference type="GO" id="GO:0009055">
    <property type="term" value="F:electron transfer activity"/>
    <property type="evidence" value="ECO:0000318"/>
    <property type="project" value="GO_Central"/>
</dbReference>
<dbReference type="GO" id="GO:0046872">
    <property type="term" value="F:metal ion binding"/>
    <property type="evidence" value="ECO:0007669"/>
    <property type="project" value="UniProtKB-KW"/>
</dbReference>
<dbReference type="GO" id="GO:0009061">
    <property type="term" value="P:anaerobic respiration"/>
    <property type="evidence" value="ECO:0000318"/>
    <property type="project" value="GO_Central"/>
</dbReference>
<dbReference type="CDD" id="cd21555">
    <property type="entry name" value="OmcS-like"/>
    <property type="match status" value="1"/>
</dbReference>
<dbReference type="Gene3D" id="1.10.1130.10">
    <property type="entry name" value="Flavocytochrome C3, Chain A"/>
    <property type="match status" value="1"/>
</dbReference>
<dbReference type="InterPro" id="IPR051174">
    <property type="entry name" value="Cytochrome_c-type_ET"/>
</dbReference>
<dbReference type="InterPro" id="IPR036280">
    <property type="entry name" value="Multihaem_cyt_sf"/>
</dbReference>
<dbReference type="PANTHER" id="PTHR30333">
    <property type="entry name" value="CYTOCHROME C-TYPE PROTEIN"/>
    <property type="match status" value="1"/>
</dbReference>
<dbReference type="PANTHER" id="PTHR30333:SF1">
    <property type="entry name" value="CYTOCHROME C-TYPE PROTEIN NAPC"/>
    <property type="match status" value="1"/>
</dbReference>
<dbReference type="SUPFAM" id="SSF48695">
    <property type="entry name" value="Multiheme cytochromes"/>
    <property type="match status" value="2"/>
</dbReference>
<feature type="signal peptide" evidence="1">
    <location>
        <begin position="1"/>
        <end position="25"/>
    </location>
</feature>
<feature type="chain" id="PRO_5004284875" description="C-type cytochrome OmcS">
    <location>
        <begin position="26"/>
        <end position="432"/>
    </location>
</feature>
<feature type="strand" evidence="9">
    <location>
        <begin position="28"/>
        <end position="30"/>
    </location>
</feature>
<feature type="helix" evidence="9">
    <location>
        <begin position="34"/>
        <end position="36"/>
    </location>
</feature>
<feature type="strand" evidence="9">
    <location>
        <begin position="40"/>
        <end position="42"/>
    </location>
</feature>
<feature type="strand" evidence="9">
    <location>
        <begin position="44"/>
        <end position="47"/>
    </location>
</feature>
<feature type="strand" evidence="9">
    <location>
        <begin position="49"/>
        <end position="53"/>
    </location>
</feature>
<feature type="strand" evidence="9">
    <location>
        <begin position="60"/>
        <end position="67"/>
    </location>
</feature>
<feature type="turn" evidence="9">
    <location>
        <begin position="68"/>
        <end position="72"/>
    </location>
</feature>
<feature type="helix" evidence="9">
    <location>
        <begin position="73"/>
        <end position="76"/>
    </location>
</feature>
<feature type="turn" evidence="9">
    <location>
        <begin position="93"/>
        <end position="95"/>
    </location>
</feature>
<feature type="helix" evidence="9">
    <location>
        <begin position="111"/>
        <end position="113"/>
    </location>
</feature>
<feature type="strand" evidence="9">
    <location>
        <begin position="122"/>
        <end position="124"/>
    </location>
</feature>
<feature type="strand" evidence="9">
    <location>
        <begin position="154"/>
        <end position="156"/>
    </location>
</feature>
<feature type="helix" evidence="9">
    <location>
        <begin position="165"/>
        <end position="168"/>
    </location>
</feature>
<feature type="strand" evidence="9">
    <location>
        <begin position="179"/>
        <end position="181"/>
    </location>
</feature>
<feature type="strand" evidence="9">
    <location>
        <begin position="183"/>
        <end position="188"/>
    </location>
</feature>
<feature type="strand" evidence="9">
    <location>
        <begin position="196"/>
        <end position="199"/>
    </location>
</feature>
<feature type="strand" evidence="9">
    <location>
        <begin position="207"/>
        <end position="209"/>
    </location>
</feature>
<feature type="strand" evidence="9">
    <location>
        <begin position="211"/>
        <end position="214"/>
    </location>
</feature>
<feature type="strand" evidence="9">
    <location>
        <begin position="248"/>
        <end position="250"/>
    </location>
</feature>
<feature type="helix" evidence="9">
    <location>
        <begin position="260"/>
        <end position="264"/>
    </location>
</feature>
<feature type="turn" evidence="9">
    <location>
        <begin position="265"/>
        <end position="267"/>
    </location>
</feature>
<feature type="strand" evidence="9">
    <location>
        <begin position="273"/>
        <end position="275"/>
    </location>
</feature>
<feature type="turn" evidence="9">
    <location>
        <begin position="276"/>
        <end position="278"/>
    </location>
</feature>
<feature type="strand" evidence="9">
    <location>
        <begin position="284"/>
        <end position="287"/>
    </location>
</feature>
<feature type="helix" evidence="9">
    <location>
        <begin position="292"/>
        <end position="300"/>
    </location>
</feature>
<feature type="strand" evidence="9">
    <location>
        <begin position="302"/>
        <end position="305"/>
    </location>
</feature>
<feature type="helix" evidence="9">
    <location>
        <begin position="311"/>
        <end position="313"/>
    </location>
</feature>
<feature type="strand" evidence="9">
    <location>
        <begin position="317"/>
        <end position="319"/>
    </location>
</feature>
<feature type="helix" evidence="9">
    <location>
        <begin position="328"/>
        <end position="332"/>
    </location>
</feature>
<feature type="strand" evidence="9">
    <location>
        <begin position="337"/>
        <end position="340"/>
    </location>
</feature>
<feature type="helix" evidence="9">
    <location>
        <begin position="353"/>
        <end position="355"/>
    </location>
</feature>
<feature type="turn" evidence="9">
    <location>
        <begin position="365"/>
        <end position="367"/>
    </location>
</feature>
<feature type="strand" evidence="9">
    <location>
        <begin position="368"/>
        <end position="370"/>
    </location>
</feature>
<feature type="strand" evidence="9">
    <location>
        <begin position="373"/>
        <end position="380"/>
    </location>
</feature>
<feature type="strand" evidence="9">
    <location>
        <begin position="382"/>
        <end position="388"/>
    </location>
</feature>
<feature type="turn" evidence="9">
    <location>
        <begin position="395"/>
        <end position="397"/>
    </location>
</feature>
<feature type="helix" evidence="9">
    <location>
        <begin position="402"/>
        <end position="408"/>
    </location>
</feature>
<feature type="helix" evidence="9">
    <location>
        <begin position="425"/>
        <end position="427"/>
    </location>
</feature>
<protein>
    <recommendedName>
        <fullName evidence="7">C-type cytochrome OmcS</fullName>
    </recommendedName>
    <alternativeName>
        <fullName evidence="6">Outer membrane cytochrome S</fullName>
    </alternativeName>
</protein>